<evidence type="ECO:0000255" key="1">
    <source>
        <dbReference type="HAMAP-Rule" id="MF_00022"/>
    </source>
</evidence>
<sequence>MTVTVRFAPSPTGYIHIGNTRTALSNWLYASKNNGKFILRYDDTDVERSKDEYAQAIAVDLDWLGVRPDRVEYQSKRFDIYAKAVEKLKTAGLLYACYETADELERRRKLRLARRLPPVYGREALKLTDAEKAALEAEGRKPHWRFLLPNFESDPFATQRTEVHWDDLVRGPQTVDLASMSDPILVREDGTYLYTLPSVVDDIDMGVTHIIRGDDHVTNTGVQISIFKALGATPPVFGHHNLLTTISGEGLSKRTGALSVGSLREAGYEPMAVASLAILIGTSESVTAAPDMAALAEHFDLASISKSSAKFDPSELDALNRSLLHEMPFEKAKPRLEALGICGAKAESFWLAVRGNLDRFSDVSDWWQVVSGDLPEAPDLSGEDRDFVRHAFDLLPPEPWNGQTWKSWTEAVKSATGRKGKNLFMPLRLALTGQAHGPELADLLVLVGLERTKSRRP</sequence>
<keyword id="KW-0030">Aminoacyl-tRNA synthetase</keyword>
<keyword id="KW-0067">ATP-binding</keyword>
<keyword id="KW-0963">Cytoplasm</keyword>
<keyword id="KW-0436">Ligase</keyword>
<keyword id="KW-0547">Nucleotide-binding</keyword>
<keyword id="KW-0648">Protein biosynthesis</keyword>
<organism>
    <name type="scientific">Brucella suis biovar 1 (strain 1330)</name>
    <dbReference type="NCBI Taxonomy" id="204722"/>
    <lineage>
        <taxon>Bacteria</taxon>
        <taxon>Pseudomonadati</taxon>
        <taxon>Pseudomonadota</taxon>
        <taxon>Alphaproteobacteria</taxon>
        <taxon>Hyphomicrobiales</taxon>
        <taxon>Brucellaceae</taxon>
        <taxon>Brucella/Ochrobactrum group</taxon>
        <taxon>Brucella</taxon>
    </lineage>
</organism>
<reference key="1">
    <citation type="journal article" date="2002" name="Proc. Natl. Acad. Sci. U.S.A.">
        <title>The Brucella suis genome reveals fundamental similarities between animal and plant pathogens and symbionts.</title>
        <authorList>
            <person name="Paulsen I.T."/>
            <person name="Seshadri R."/>
            <person name="Nelson K.E."/>
            <person name="Eisen J.A."/>
            <person name="Heidelberg J.F."/>
            <person name="Read T.D."/>
            <person name="Dodson R.J."/>
            <person name="Umayam L.A."/>
            <person name="Brinkac L.M."/>
            <person name="Beanan M.J."/>
            <person name="Daugherty S.C."/>
            <person name="DeBoy R.T."/>
            <person name="Durkin A.S."/>
            <person name="Kolonay J.F."/>
            <person name="Madupu R."/>
            <person name="Nelson W.C."/>
            <person name="Ayodeji B."/>
            <person name="Kraul M."/>
            <person name="Shetty J."/>
            <person name="Malek J.A."/>
            <person name="Van Aken S.E."/>
            <person name="Riedmuller S."/>
            <person name="Tettelin H."/>
            <person name="Gill S.R."/>
            <person name="White O."/>
            <person name="Salzberg S.L."/>
            <person name="Hoover D.L."/>
            <person name="Lindler L.E."/>
            <person name="Halling S.M."/>
            <person name="Boyle S.M."/>
            <person name="Fraser C.M."/>
        </authorList>
    </citation>
    <scope>NUCLEOTIDE SEQUENCE [LARGE SCALE GENOMIC DNA]</scope>
    <source>
        <strain>1330</strain>
    </source>
</reference>
<reference key="2">
    <citation type="journal article" date="2011" name="J. Bacteriol.">
        <title>Revised genome sequence of Brucella suis 1330.</title>
        <authorList>
            <person name="Tae H."/>
            <person name="Shallom S."/>
            <person name="Settlage R."/>
            <person name="Preston D."/>
            <person name="Adams L.G."/>
            <person name="Garner H.R."/>
        </authorList>
    </citation>
    <scope>NUCLEOTIDE SEQUENCE [LARGE SCALE GENOMIC DNA]</scope>
    <source>
        <strain>1330</strain>
    </source>
</reference>
<protein>
    <recommendedName>
        <fullName evidence="1">Glutamate--tRNA ligase 1</fullName>
        <ecNumber evidence="1">6.1.1.17</ecNumber>
    </recommendedName>
    <alternativeName>
        <fullName evidence="1">Glutamyl-tRNA synthetase 1</fullName>
        <shortName evidence="1">GluRS 1</shortName>
    </alternativeName>
</protein>
<gene>
    <name evidence="1" type="primary">gltX1</name>
    <name type="synonym">gltX2</name>
    <name type="ordered locus">BR1016</name>
    <name type="ordered locus">BS1330_I1012</name>
</gene>
<feature type="chain" id="PRO_0000119525" description="Glutamate--tRNA ligase 1">
    <location>
        <begin position="1"/>
        <end position="457"/>
    </location>
</feature>
<feature type="short sequence motif" description="'HIGH' region" evidence="1">
    <location>
        <begin position="9"/>
        <end position="19"/>
    </location>
</feature>
<feature type="short sequence motif" description="'KMSKS' region" evidence="1">
    <location>
        <begin position="250"/>
        <end position="254"/>
    </location>
</feature>
<feature type="binding site" evidence="1">
    <location>
        <position position="253"/>
    </location>
    <ligand>
        <name>ATP</name>
        <dbReference type="ChEBI" id="CHEBI:30616"/>
    </ligand>
</feature>
<proteinExistence type="inferred from homology"/>
<accession>Q8G0S1</accession>
<accession>G0K9U0</accession>
<comment type="function">
    <text evidence="1">Catalyzes the attachment of glutamate to tRNA(Glu) in a two-step reaction: glutamate is first activated by ATP to form Glu-AMP and then transferred to the acceptor end of tRNA(Glu).</text>
</comment>
<comment type="catalytic activity">
    <reaction evidence="1">
        <text>tRNA(Glu) + L-glutamate + ATP = L-glutamyl-tRNA(Glu) + AMP + diphosphate</text>
        <dbReference type="Rhea" id="RHEA:23540"/>
        <dbReference type="Rhea" id="RHEA-COMP:9663"/>
        <dbReference type="Rhea" id="RHEA-COMP:9680"/>
        <dbReference type="ChEBI" id="CHEBI:29985"/>
        <dbReference type="ChEBI" id="CHEBI:30616"/>
        <dbReference type="ChEBI" id="CHEBI:33019"/>
        <dbReference type="ChEBI" id="CHEBI:78442"/>
        <dbReference type="ChEBI" id="CHEBI:78520"/>
        <dbReference type="ChEBI" id="CHEBI:456215"/>
        <dbReference type="EC" id="6.1.1.17"/>
    </reaction>
</comment>
<comment type="subunit">
    <text evidence="1">Monomer.</text>
</comment>
<comment type="subcellular location">
    <subcellularLocation>
        <location evidence="1">Cytoplasm</location>
    </subcellularLocation>
</comment>
<comment type="similarity">
    <text evidence="1">Belongs to the class-I aminoacyl-tRNA synthetase family. Glutamate--tRNA ligase type 1 subfamily.</text>
</comment>
<dbReference type="EC" id="6.1.1.17" evidence="1"/>
<dbReference type="EMBL" id="AE014291">
    <property type="protein sequence ID" value="AAN29938.1"/>
    <property type="molecule type" value="Genomic_DNA"/>
</dbReference>
<dbReference type="EMBL" id="CP002997">
    <property type="protein sequence ID" value="AEM18356.1"/>
    <property type="molecule type" value="Genomic_DNA"/>
</dbReference>
<dbReference type="SMR" id="Q8G0S1"/>
<dbReference type="KEGG" id="bms:BR1016"/>
<dbReference type="KEGG" id="bsi:BS1330_I1012"/>
<dbReference type="PATRIC" id="fig|204722.21.peg.752"/>
<dbReference type="HOGENOM" id="CLU_015768_6_1_5"/>
<dbReference type="PhylomeDB" id="Q8G0S1"/>
<dbReference type="Proteomes" id="UP000007104">
    <property type="component" value="Chromosome I"/>
</dbReference>
<dbReference type="GO" id="GO:0005737">
    <property type="term" value="C:cytoplasm"/>
    <property type="evidence" value="ECO:0007669"/>
    <property type="project" value="UniProtKB-SubCell"/>
</dbReference>
<dbReference type="GO" id="GO:0005524">
    <property type="term" value="F:ATP binding"/>
    <property type="evidence" value="ECO:0007669"/>
    <property type="project" value="UniProtKB-UniRule"/>
</dbReference>
<dbReference type="GO" id="GO:0004818">
    <property type="term" value="F:glutamate-tRNA ligase activity"/>
    <property type="evidence" value="ECO:0007669"/>
    <property type="project" value="UniProtKB-UniRule"/>
</dbReference>
<dbReference type="GO" id="GO:0000049">
    <property type="term" value="F:tRNA binding"/>
    <property type="evidence" value="ECO:0007669"/>
    <property type="project" value="InterPro"/>
</dbReference>
<dbReference type="GO" id="GO:0008270">
    <property type="term" value="F:zinc ion binding"/>
    <property type="evidence" value="ECO:0007669"/>
    <property type="project" value="InterPro"/>
</dbReference>
<dbReference type="GO" id="GO:0006424">
    <property type="term" value="P:glutamyl-tRNA aminoacylation"/>
    <property type="evidence" value="ECO:0007669"/>
    <property type="project" value="UniProtKB-UniRule"/>
</dbReference>
<dbReference type="CDD" id="cd00808">
    <property type="entry name" value="GluRS_core"/>
    <property type="match status" value="1"/>
</dbReference>
<dbReference type="Gene3D" id="1.10.10.350">
    <property type="match status" value="1"/>
</dbReference>
<dbReference type="Gene3D" id="3.40.50.620">
    <property type="entry name" value="HUPs"/>
    <property type="match status" value="1"/>
</dbReference>
<dbReference type="HAMAP" id="MF_00022">
    <property type="entry name" value="Glu_tRNA_synth_type1"/>
    <property type="match status" value="1"/>
</dbReference>
<dbReference type="InterPro" id="IPR045462">
    <property type="entry name" value="aa-tRNA-synth_I_cd-bd"/>
</dbReference>
<dbReference type="InterPro" id="IPR020751">
    <property type="entry name" value="aa-tRNA-synth_I_codon-bd_sub2"/>
</dbReference>
<dbReference type="InterPro" id="IPR001412">
    <property type="entry name" value="aa-tRNA-synth_I_CS"/>
</dbReference>
<dbReference type="InterPro" id="IPR008925">
    <property type="entry name" value="aa_tRNA-synth_I_cd-bd_sf"/>
</dbReference>
<dbReference type="InterPro" id="IPR004527">
    <property type="entry name" value="Glu-tRNA-ligase_bac/mito"/>
</dbReference>
<dbReference type="InterPro" id="IPR000924">
    <property type="entry name" value="Glu/Gln-tRNA-synth"/>
</dbReference>
<dbReference type="InterPro" id="IPR020058">
    <property type="entry name" value="Glu/Gln-tRNA-synth_Ib_cat-dom"/>
</dbReference>
<dbReference type="InterPro" id="IPR049940">
    <property type="entry name" value="GluQ/Sye"/>
</dbReference>
<dbReference type="InterPro" id="IPR033910">
    <property type="entry name" value="GluRS_core"/>
</dbReference>
<dbReference type="InterPro" id="IPR014729">
    <property type="entry name" value="Rossmann-like_a/b/a_fold"/>
</dbReference>
<dbReference type="NCBIfam" id="TIGR00464">
    <property type="entry name" value="gltX_bact"/>
    <property type="match status" value="1"/>
</dbReference>
<dbReference type="PANTHER" id="PTHR43311">
    <property type="entry name" value="GLUTAMATE--TRNA LIGASE"/>
    <property type="match status" value="1"/>
</dbReference>
<dbReference type="PANTHER" id="PTHR43311:SF2">
    <property type="entry name" value="GLUTAMATE--TRNA LIGASE, MITOCHONDRIAL-RELATED"/>
    <property type="match status" value="1"/>
</dbReference>
<dbReference type="Pfam" id="PF19269">
    <property type="entry name" value="Anticodon_2"/>
    <property type="match status" value="1"/>
</dbReference>
<dbReference type="Pfam" id="PF00749">
    <property type="entry name" value="tRNA-synt_1c"/>
    <property type="match status" value="1"/>
</dbReference>
<dbReference type="PRINTS" id="PR00987">
    <property type="entry name" value="TRNASYNTHGLU"/>
</dbReference>
<dbReference type="SUPFAM" id="SSF48163">
    <property type="entry name" value="An anticodon-binding domain of class I aminoacyl-tRNA synthetases"/>
    <property type="match status" value="1"/>
</dbReference>
<dbReference type="SUPFAM" id="SSF52374">
    <property type="entry name" value="Nucleotidylyl transferase"/>
    <property type="match status" value="1"/>
</dbReference>
<dbReference type="PROSITE" id="PS00178">
    <property type="entry name" value="AA_TRNA_LIGASE_I"/>
    <property type="match status" value="1"/>
</dbReference>
<name>SYE1_BRUSU</name>